<accession>B9JDB9</accession>
<dbReference type="EC" id="4.2.1.49" evidence="1"/>
<dbReference type="EMBL" id="CP000628">
    <property type="protein sequence ID" value="ACM28248.1"/>
    <property type="molecule type" value="Genomic_DNA"/>
</dbReference>
<dbReference type="RefSeq" id="WP_007694191.1">
    <property type="nucleotide sequence ID" value="NC_011985.1"/>
</dbReference>
<dbReference type="SMR" id="B9JDB9"/>
<dbReference type="STRING" id="311403.Arad_4562"/>
<dbReference type="KEGG" id="ara:Arad_4562"/>
<dbReference type="eggNOG" id="COG2987">
    <property type="taxonomic scope" value="Bacteria"/>
</dbReference>
<dbReference type="HOGENOM" id="CLU_018868_0_1_5"/>
<dbReference type="UniPathway" id="UPA00379">
    <property type="reaction ID" value="UER00550"/>
</dbReference>
<dbReference type="Proteomes" id="UP000001600">
    <property type="component" value="Chromosome 1"/>
</dbReference>
<dbReference type="GO" id="GO:0005737">
    <property type="term" value="C:cytoplasm"/>
    <property type="evidence" value="ECO:0007669"/>
    <property type="project" value="UniProtKB-SubCell"/>
</dbReference>
<dbReference type="GO" id="GO:0016153">
    <property type="term" value="F:urocanate hydratase activity"/>
    <property type="evidence" value="ECO:0007669"/>
    <property type="project" value="UniProtKB-UniRule"/>
</dbReference>
<dbReference type="GO" id="GO:0019556">
    <property type="term" value="P:L-histidine catabolic process to glutamate and formamide"/>
    <property type="evidence" value="ECO:0007669"/>
    <property type="project" value="UniProtKB-UniPathway"/>
</dbReference>
<dbReference type="GO" id="GO:0019557">
    <property type="term" value="P:L-histidine catabolic process to glutamate and formate"/>
    <property type="evidence" value="ECO:0007669"/>
    <property type="project" value="UniProtKB-UniPathway"/>
</dbReference>
<dbReference type="FunFam" id="3.40.50.10730:FF:000001">
    <property type="entry name" value="Urocanate hydratase"/>
    <property type="match status" value="1"/>
</dbReference>
<dbReference type="Gene3D" id="3.40.50.10730">
    <property type="entry name" value="Urocanase like domains"/>
    <property type="match status" value="1"/>
</dbReference>
<dbReference type="Gene3D" id="3.40.1770.10">
    <property type="entry name" value="Urocanase superfamily"/>
    <property type="match status" value="1"/>
</dbReference>
<dbReference type="HAMAP" id="MF_00577">
    <property type="entry name" value="HutU"/>
    <property type="match status" value="1"/>
</dbReference>
<dbReference type="InterPro" id="IPR055351">
    <property type="entry name" value="Urocanase"/>
</dbReference>
<dbReference type="InterPro" id="IPR023637">
    <property type="entry name" value="Urocanase-like"/>
</dbReference>
<dbReference type="InterPro" id="IPR035401">
    <property type="entry name" value="Urocanase_C"/>
</dbReference>
<dbReference type="InterPro" id="IPR038364">
    <property type="entry name" value="Urocanase_central_sf"/>
</dbReference>
<dbReference type="InterPro" id="IPR023636">
    <property type="entry name" value="Urocanase_CS"/>
</dbReference>
<dbReference type="InterPro" id="IPR035400">
    <property type="entry name" value="Urocanase_N"/>
</dbReference>
<dbReference type="InterPro" id="IPR035085">
    <property type="entry name" value="Urocanase_Rossmann-like"/>
</dbReference>
<dbReference type="InterPro" id="IPR036190">
    <property type="entry name" value="Urocanase_sf"/>
</dbReference>
<dbReference type="NCBIfam" id="TIGR01228">
    <property type="entry name" value="hutU"/>
    <property type="match status" value="1"/>
</dbReference>
<dbReference type="NCBIfam" id="NF003820">
    <property type="entry name" value="PRK05414.1"/>
    <property type="match status" value="1"/>
</dbReference>
<dbReference type="PANTHER" id="PTHR12216">
    <property type="entry name" value="UROCANATE HYDRATASE"/>
    <property type="match status" value="1"/>
</dbReference>
<dbReference type="PANTHER" id="PTHR12216:SF4">
    <property type="entry name" value="UROCANATE HYDRATASE"/>
    <property type="match status" value="1"/>
</dbReference>
<dbReference type="Pfam" id="PF01175">
    <property type="entry name" value="Urocanase"/>
    <property type="match status" value="1"/>
</dbReference>
<dbReference type="Pfam" id="PF17392">
    <property type="entry name" value="Urocanase_C"/>
    <property type="match status" value="1"/>
</dbReference>
<dbReference type="Pfam" id="PF17391">
    <property type="entry name" value="Urocanase_N"/>
    <property type="match status" value="1"/>
</dbReference>
<dbReference type="PIRSF" id="PIRSF001423">
    <property type="entry name" value="Urocanate_hydrat"/>
    <property type="match status" value="1"/>
</dbReference>
<dbReference type="SUPFAM" id="SSF111326">
    <property type="entry name" value="Urocanase"/>
    <property type="match status" value="1"/>
</dbReference>
<dbReference type="PROSITE" id="PS01233">
    <property type="entry name" value="UROCANASE"/>
    <property type="match status" value="1"/>
</dbReference>
<gene>
    <name evidence="1" type="primary">hutU</name>
    <name type="ordered locus">Arad_4562</name>
</gene>
<comment type="function">
    <text evidence="1">Catalyzes the conversion of urocanate to 4-imidazolone-5-propionate.</text>
</comment>
<comment type="catalytic activity">
    <reaction evidence="1">
        <text>4-imidazolone-5-propanoate = trans-urocanate + H2O</text>
        <dbReference type="Rhea" id="RHEA:13101"/>
        <dbReference type="ChEBI" id="CHEBI:15377"/>
        <dbReference type="ChEBI" id="CHEBI:17771"/>
        <dbReference type="ChEBI" id="CHEBI:77893"/>
        <dbReference type="EC" id="4.2.1.49"/>
    </reaction>
</comment>
<comment type="cofactor">
    <cofactor evidence="1">
        <name>NAD(+)</name>
        <dbReference type="ChEBI" id="CHEBI:57540"/>
    </cofactor>
    <text evidence="1">Binds 1 NAD(+) per subunit.</text>
</comment>
<comment type="pathway">
    <text evidence="1">Amino-acid degradation; L-histidine degradation into L-glutamate; N-formimidoyl-L-glutamate from L-histidine: step 2/3.</text>
</comment>
<comment type="subcellular location">
    <subcellularLocation>
        <location evidence="1">Cytoplasm</location>
    </subcellularLocation>
</comment>
<comment type="similarity">
    <text evidence="1">Belongs to the urocanase family.</text>
</comment>
<name>HUTU_RHIR8</name>
<evidence type="ECO:0000255" key="1">
    <source>
        <dbReference type="HAMAP-Rule" id="MF_00577"/>
    </source>
</evidence>
<keyword id="KW-0963">Cytoplasm</keyword>
<keyword id="KW-0369">Histidine metabolism</keyword>
<keyword id="KW-0456">Lyase</keyword>
<keyword id="KW-0520">NAD</keyword>
<reference key="1">
    <citation type="journal article" date="2009" name="J. Bacteriol.">
        <title>Genome sequences of three Agrobacterium biovars help elucidate the evolution of multichromosome genomes in bacteria.</title>
        <authorList>
            <person name="Slater S.C."/>
            <person name="Goldman B.S."/>
            <person name="Goodner B."/>
            <person name="Setubal J.C."/>
            <person name="Farrand S.K."/>
            <person name="Nester E.W."/>
            <person name="Burr T.J."/>
            <person name="Banta L."/>
            <person name="Dickerman A.W."/>
            <person name="Paulsen I."/>
            <person name="Otten L."/>
            <person name="Suen G."/>
            <person name="Welch R."/>
            <person name="Almeida N.F."/>
            <person name="Arnold F."/>
            <person name="Burton O.T."/>
            <person name="Du Z."/>
            <person name="Ewing A."/>
            <person name="Godsy E."/>
            <person name="Heisel S."/>
            <person name="Houmiel K.L."/>
            <person name="Jhaveri J."/>
            <person name="Lu J."/>
            <person name="Miller N.M."/>
            <person name="Norton S."/>
            <person name="Chen Q."/>
            <person name="Phoolcharoen W."/>
            <person name="Ohlin V."/>
            <person name="Ondrusek D."/>
            <person name="Pride N."/>
            <person name="Stricklin S.L."/>
            <person name="Sun J."/>
            <person name="Wheeler C."/>
            <person name="Wilson L."/>
            <person name="Zhu H."/>
            <person name="Wood D.W."/>
        </authorList>
    </citation>
    <scope>NUCLEOTIDE SEQUENCE [LARGE SCALE GENOMIC DNA]</scope>
    <source>
        <strain>K84 / ATCC BAA-868</strain>
    </source>
</reference>
<sequence length="561" mass="61249">MTNPRHNIREIRSPRGPELNAKSWMTEAPLRMLMNNLDPDVAENPNELVVYGGIGRAARTWEDFDRIAATLKTLTEEETLLVQSGKPVGVFRTHKDAPRVLIANSNLVPHWATWDHFNELDKKGLAMYGQMTAGSWIYIGTQGIVQGTYETFVEAGRQHYNGSLKGKWILTGGLGGMGGAQPLAAVMAGACCLAVESDETRIDFRLRTRYVDEKATSLDEALAMIDKWTKAGEAKSVGLLGNAAEIFPELVKRMKAGGPRPDIVTDQTSAHDPLNGYLPLGWTVAEHKIKRESDPKAVEAAARASMKMHVEAMVAFWDAGVPTLDYGNNIRQVAKEEGFENAFAFPGFVPAYIRPLFCRGIGPFRWAALSGDPEDIYKTDAKVKELTPGNTHLHNWLDMARERIAFQGLPARICWVGLGDRERLGLAFNEMVKNGELKAPVVIGRDHLDSGSVASPNRETEAMKDGSDAVSDWPLLNALLNTASGATWVSLHHGGGVGMGFSQHSGMVICADGTDDAARRIERVLWNDPATGVMRHADAGYDIALDCAKDKGLRLPGILGN</sequence>
<proteinExistence type="inferred from homology"/>
<protein>
    <recommendedName>
        <fullName evidence="1">Urocanate hydratase</fullName>
        <shortName evidence="1">Urocanase</shortName>
        <ecNumber evidence="1">4.2.1.49</ecNumber>
    </recommendedName>
    <alternativeName>
        <fullName evidence="1">Imidazolonepropionate hydrolase</fullName>
    </alternativeName>
</protein>
<organism>
    <name type="scientific">Rhizobium rhizogenes (strain K84 / ATCC BAA-868)</name>
    <name type="common">Agrobacterium radiobacter</name>
    <dbReference type="NCBI Taxonomy" id="311403"/>
    <lineage>
        <taxon>Bacteria</taxon>
        <taxon>Pseudomonadati</taxon>
        <taxon>Pseudomonadota</taxon>
        <taxon>Alphaproteobacteria</taxon>
        <taxon>Hyphomicrobiales</taxon>
        <taxon>Rhizobiaceae</taxon>
        <taxon>Rhizobium/Agrobacterium group</taxon>
        <taxon>Rhizobium</taxon>
    </lineage>
</organism>
<feature type="chain" id="PRO_1000199892" description="Urocanate hydratase">
    <location>
        <begin position="1"/>
        <end position="561"/>
    </location>
</feature>
<feature type="active site" evidence="1">
    <location>
        <position position="414"/>
    </location>
</feature>
<feature type="binding site" evidence="1">
    <location>
        <begin position="52"/>
        <end position="53"/>
    </location>
    <ligand>
        <name>NAD(+)</name>
        <dbReference type="ChEBI" id="CHEBI:57540"/>
    </ligand>
</feature>
<feature type="binding site" evidence="1">
    <location>
        <position position="130"/>
    </location>
    <ligand>
        <name>NAD(+)</name>
        <dbReference type="ChEBI" id="CHEBI:57540"/>
    </ligand>
</feature>
<feature type="binding site" evidence="1">
    <location>
        <begin position="176"/>
        <end position="178"/>
    </location>
    <ligand>
        <name>NAD(+)</name>
        <dbReference type="ChEBI" id="CHEBI:57540"/>
    </ligand>
</feature>
<feature type="binding site" evidence="1">
    <location>
        <position position="196"/>
    </location>
    <ligand>
        <name>NAD(+)</name>
        <dbReference type="ChEBI" id="CHEBI:57540"/>
    </ligand>
</feature>
<feature type="binding site" evidence="1">
    <location>
        <position position="201"/>
    </location>
    <ligand>
        <name>NAD(+)</name>
        <dbReference type="ChEBI" id="CHEBI:57540"/>
    </ligand>
</feature>
<feature type="binding site" evidence="1">
    <location>
        <begin position="242"/>
        <end position="243"/>
    </location>
    <ligand>
        <name>NAD(+)</name>
        <dbReference type="ChEBI" id="CHEBI:57540"/>
    </ligand>
</feature>
<feature type="binding site" evidence="1">
    <location>
        <begin position="267"/>
        <end position="271"/>
    </location>
    <ligand>
        <name>NAD(+)</name>
        <dbReference type="ChEBI" id="CHEBI:57540"/>
    </ligand>
</feature>
<feature type="binding site" evidence="1">
    <location>
        <begin position="277"/>
        <end position="278"/>
    </location>
    <ligand>
        <name>NAD(+)</name>
        <dbReference type="ChEBI" id="CHEBI:57540"/>
    </ligand>
</feature>
<feature type="binding site" evidence="1">
    <location>
        <position position="326"/>
    </location>
    <ligand>
        <name>NAD(+)</name>
        <dbReference type="ChEBI" id="CHEBI:57540"/>
    </ligand>
</feature>
<feature type="binding site" evidence="1">
    <location>
        <position position="496"/>
    </location>
    <ligand>
        <name>NAD(+)</name>
        <dbReference type="ChEBI" id="CHEBI:57540"/>
    </ligand>
</feature>